<name>COFI_CRYNJ</name>
<evidence type="ECO:0000250" key="1"/>
<evidence type="ECO:0000255" key="2">
    <source>
        <dbReference type="PROSITE-ProRule" id="PRU00599"/>
    </source>
</evidence>
<evidence type="ECO:0000305" key="3"/>
<keyword id="KW-0009">Actin-binding</keyword>
<keyword id="KW-0131">Cell cycle</keyword>
<keyword id="KW-0132">Cell division</keyword>
<keyword id="KW-0963">Cytoplasm</keyword>
<keyword id="KW-0206">Cytoskeleton</keyword>
<keyword id="KW-0539">Nucleus</keyword>
<keyword id="KW-1185">Reference proteome</keyword>
<accession>P0CM06</accession>
<accession>Q55WM0</accession>
<accession>Q5KJM6</accession>
<sequence>MSSGVQPTQECLEKFQELKTGKKLTYVIYGLSEDKRSIVVLKASEDKDFDSFVAELPEKDCRWAVYDFEFTLPGGEGVRNKLCFIVWSPDDASVKNKMIFASSKEAIRRRLDGIHTEIQATDFSEITKDALFEKATRK</sequence>
<protein>
    <recommendedName>
        <fullName>Cofilin</fullName>
    </recommendedName>
    <alternativeName>
        <fullName>Actin-depolymerizing factor 1</fullName>
    </alternativeName>
</protein>
<reference key="1">
    <citation type="journal article" date="2005" name="Science">
        <title>The genome of the basidiomycetous yeast and human pathogen Cryptococcus neoformans.</title>
        <authorList>
            <person name="Loftus B.J."/>
            <person name="Fung E."/>
            <person name="Roncaglia P."/>
            <person name="Rowley D."/>
            <person name="Amedeo P."/>
            <person name="Bruno D."/>
            <person name="Vamathevan J."/>
            <person name="Miranda M."/>
            <person name="Anderson I.J."/>
            <person name="Fraser J.A."/>
            <person name="Allen J.E."/>
            <person name="Bosdet I.E."/>
            <person name="Brent M.R."/>
            <person name="Chiu R."/>
            <person name="Doering T.L."/>
            <person name="Donlin M.J."/>
            <person name="D'Souza C.A."/>
            <person name="Fox D.S."/>
            <person name="Grinberg V."/>
            <person name="Fu J."/>
            <person name="Fukushima M."/>
            <person name="Haas B.J."/>
            <person name="Huang J.C."/>
            <person name="Janbon G."/>
            <person name="Jones S.J.M."/>
            <person name="Koo H.L."/>
            <person name="Krzywinski M.I."/>
            <person name="Kwon-Chung K.J."/>
            <person name="Lengeler K.B."/>
            <person name="Maiti R."/>
            <person name="Marra M.A."/>
            <person name="Marra R.E."/>
            <person name="Mathewson C.A."/>
            <person name="Mitchell T.G."/>
            <person name="Pertea M."/>
            <person name="Riggs F.R."/>
            <person name="Salzberg S.L."/>
            <person name="Schein J.E."/>
            <person name="Shvartsbeyn A."/>
            <person name="Shin H."/>
            <person name="Shumway M."/>
            <person name="Specht C.A."/>
            <person name="Suh B.B."/>
            <person name="Tenney A."/>
            <person name="Utterback T.R."/>
            <person name="Wickes B.L."/>
            <person name="Wortman J.R."/>
            <person name="Wye N.H."/>
            <person name="Kronstad J.W."/>
            <person name="Lodge J.K."/>
            <person name="Heitman J."/>
            <person name="Davis R.W."/>
            <person name="Fraser C.M."/>
            <person name="Hyman R.W."/>
        </authorList>
    </citation>
    <scope>NUCLEOTIDE SEQUENCE [LARGE SCALE GENOMIC DNA]</scope>
    <source>
        <strain>JEC21 / ATCC MYA-565</strain>
    </source>
</reference>
<proteinExistence type="inferred from homology"/>
<organism>
    <name type="scientific">Cryptococcus neoformans var. neoformans serotype D (strain JEC21 / ATCC MYA-565)</name>
    <name type="common">Filobasidiella neoformans</name>
    <dbReference type="NCBI Taxonomy" id="214684"/>
    <lineage>
        <taxon>Eukaryota</taxon>
        <taxon>Fungi</taxon>
        <taxon>Dikarya</taxon>
        <taxon>Basidiomycota</taxon>
        <taxon>Agaricomycotina</taxon>
        <taxon>Tremellomycetes</taxon>
        <taxon>Tremellales</taxon>
        <taxon>Cryptococcaceae</taxon>
        <taxon>Cryptococcus</taxon>
        <taxon>Cryptococcus neoformans species complex</taxon>
    </lineage>
</organism>
<comment type="function">
    <text evidence="1">Controls reversibly actin polymerization and depolymerization in a pH-sensitive manner. It has the ability to bind G- and F-actin in a 1:1 ratio of cofilin to actin. Binding to F-actin is regulated by tropomyosin. It is the major component of intranuclear and cytoplasmic actin rods. Required for accumulation of actin at the cell division site via depolymerizing actin at the cell ends. In association with myosin II has a role in the assembly of the contractile ring via severing actin filaments. Involved in the maintenance of the contractile ring once formed. In association with profilin and capping protein, has a role in the mitotic reorganization of the actin cytoskeleton (By similarity).</text>
</comment>
<comment type="subcellular location">
    <subcellularLocation>
        <location evidence="1">Cytoplasm</location>
    </subcellularLocation>
    <subcellularLocation>
        <location evidence="1">Cytoplasm</location>
        <location evidence="1">Cytoskeleton</location>
    </subcellularLocation>
    <subcellularLocation>
        <location evidence="1">Nucleus matrix</location>
    </subcellularLocation>
    <text evidence="1">Throughout the cytoplasm (but not on the cytoplasmic cables) and major component of the cortical actin cytoskeleton.</text>
</comment>
<comment type="similarity">
    <text evidence="3">Belongs to the actin-binding proteins ADF family.</text>
</comment>
<gene>
    <name type="primary">COF1</name>
    <name type="ordered locus">CNC05990</name>
</gene>
<dbReference type="EMBL" id="AE017343">
    <property type="protein sequence ID" value="AAW42673.1"/>
    <property type="molecule type" value="Genomic_DNA"/>
</dbReference>
<dbReference type="RefSeq" id="XP_569980.1">
    <property type="nucleotide sequence ID" value="XM_569980.1"/>
</dbReference>
<dbReference type="SMR" id="P0CM06"/>
<dbReference type="FunCoup" id="P0CM06">
    <property type="interactions" value="138"/>
</dbReference>
<dbReference type="STRING" id="214684.P0CM06"/>
<dbReference type="PaxDb" id="214684-P0CM06"/>
<dbReference type="EnsemblFungi" id="AAW42673">
    <property type="protein sequence ID" value="AAW42673"/>
    <property type="gene ID" value="CNC05990"/>
</dbReference>
<dbReference type="GeneID" id="3256627"/>
<dbReference type="KEGG" id="cne:CNC05990"/>
<dbReference type="VEuPathDB" id="FungiDB:CNC05990"/>
<dbReference type="eggNOG" id="KOG1735">
    <property type="taxonomic scope" value="Eukaryota"/>
</dbReference>
<dbReference type="HOGENOM" id="CLU_094004_3_2_1"/>
<dbReference type="InParanoid" id="P0CM06"/>
<dbReference type="OMA" id="QCRFAVY"/>
<dbReference type="OrthoDB" id="10249245at2759"/>
<dbReference type="Proteomes" id="UP000002149">
    <property type="component" value="Chromosome 3"/>
</dbReference>
<dbReference type="GO" id="GO:0030479">
    <property type="term" value="C:actin cortical patch"/>
    <property type="evidence" value="ECO:0000318"/>
    <property type="project" value="GO_Central"/>
</dbReference>
<dbReference type="GO" id="GO:0015629">
    <property type="term" value="C:actin cytoskeleton"/>
    <property type="evidence" value="ECO:0000318"/>
    <property type="project" value="GO_Central"/>
</dbReference>
<dbReference type="GO" id="GO:0005737">
    <property type="term" value="C:cytoplasm"/>
    <property type="evidence" value="ECO:0000318"/>
    <property type="project" value="GO_Central"/>
</dbReference>
<dbReference type="GO" id="GO:0016363">
    <property type="term" value="C:nuclear matrix"/>
    <property type="evidence" value="ECO:0007669"/>
    <property type="project" value="UniProtKB-SubCell"/>
</dbReference>
<dbReference type="GO" id="GO:0051015">
    <property type="term" value="F:actin filament binding"/>
    <property type="evidence" value="ECO:0000318"/>
    <property type="project" value="GO_Central"/>
</dbReference>
<dbReference type="GO" id="GO:0030042">
    <property type="term" value="P:actin filament depolymerization"/>
    <property type="evidence" value="ECO:0000318"/>
    <property type="project" value="GO_Central"/>
</dbReference>
<dbReference type="GO" id="GO:0051014">
    <property type="term" value="P:actin filament severing"/>
    <property type="evidence" value="ECO:0000318"/>
    <property type="project" value="GO_Central"/>
</dbReference>
<dbReference type="GO" id="GO:0051301">
    <property type="term" value="P:cell division"/>
    <property type="evidence" value="ECO:0007669"/>
    <property type="project" value="UniProtKB-KW"/>
</dbReference>
<dbReference type="CDD" id="cd11286">
    <property type="entry name" value="ADF_cofilin_like"/>
    <property type="match status" value="1"/>
</dbReference>
<dbReference type="Gene3D" id="3.40.20.10">
    <property type="entry name" value="Severin"/>
    <property type="match status" value="1"/>
</dbReference>
<dbReference type="InterPro" id="IPR002108">
    <property type="entry name" value="ADF-H"/>
</dbReference>
<dbReference type="InterPro" id="IPR029006">
    <property type="entry name" value="ADF-H/Gelsolin-like_dom_sf"/>
</dbReference>
<dbReference type="InterPro" id="IPR017904">
    <property type="entry name" value="ADF/Cofilin"/>
</dbReference>
<dbReference type="PANTHER" id="PTHR11913">
    <property type="entry name" value="COFILIN-RELATED"/>
    <property type="match status" value="1"/>
</dbReference>
<dbReference type="Pfam" id="PF00241">
    <property type="entry name" value="Cofilin_ADF"/>
    <property type="match status" value="1"/>
</dbReference>
<dbReference type="SMART" id="SM00102">
    <property type="entry name" value="ADF"/>
    <property type="match status" value="1"/>
</dbReference>
<dbReference type="SUPFAM" id="SSF55753">
    <property type="entry name" value="Actin depolymerizing proteins"/>
    <property type="match status" value="1"/>
</dbReference>
<dbReference type="PROSITE" id="PS51263">
    <property type="entry name" value="ADF_H"/>
    <property type="match status" value="1"/>
</dbReference>
<feature type="chain" id="PRO_0000255623" description="Cofilin">
    <location>
        <begin position="1"/>
        <end position="138"/>
    </location>
</feature>
<feature type="domain" description="ADF-H" evidence="2">
    <location>
        <begin position="2"/>
        <end position="136"/>
    </location>
</feature>